<accession>B1Y2Y8</accession>
<protein>
    <recommendedName>
        <fullName evidence="2">Transaldolase</fullName>
        <ecNumber evidence="2">2.2.1.2</ecNumber>
    </recommendedName>
</protein>
<organism>
    <name type="scientific">Leptothrix cholodnii (strain ATCC 51168 / LMG 8142 / SP-6)</name>
    <name type="common">Leptothrix discophora (strain SP-6)</name>
    <dbReference type="NCBI Taxonomy" id="395495"/>
    <lineage>
        <taxon>Bacteria</taxon>
        <taxon>Pseudomonadati</taxon>
        <taxon>Pseudomonadota</taxon>
        <taxon>Betaproteobacteria</taxon>
        <taxon>Burkholderiales</taxon>
        <taxon>Sphaerotilaceae</taxon>
        <taxon>Leptothrix</taxon>
    </lineage>
</organism>
<sequence>MNQLDQLKRLTTVVADTGNFLQLAQFAPQDATTNPSLILKAVQQAEYAPLLTETVARHRGLPLDQVVDQVLVRFGLEILKIVPGRVSTEVDARLSFDTAATVARAHRIINLYDDAGIGRERVLIKIASTWEGIQAAAELEREGIHCNLTLLFAFAQAVACGAAGVQLISPFVGRIYDWYKKSAGANWDEAAMAGANDPGVKSVAQIYSYYKKFGIATEVMGASFRNVGQITALAGCDLLTISPDLLAQLQASEEPISAALDAAAARDAAIDAVRYDEPGFRFALNEDAMATEKLAEGIRAFAADAAKLDKMILAL</sequence>
<comment type="function">
    <text evidence="2">Transaldolase is important for the balance of metabolites in the pentose-phosphate pathway.</text>
</comment>
<comment type="catalytic activity">
    <reaction evidence="2">
        <text>D-sedoheptulose 7-phosphate + D-glyceraldehyde 3-phosphate = D-erythrose 4-phosphate + beta-D-fructose 6-phosphate</text>
        <dbReference type="Rhea" id="RHEA:17053"/>
        <dbReference type="ChEBI" id="CHEBI:16897"/>
        <dbReference type="ChEBI" id="CHEBI:57483"/>
        <dbReference type="ChEBI" id="CHEBI:57634"/>
        <dbReference type="ChEBI" id="CHEBI:59776"/>
        <dbReference type="EC" id="2.2.1.2"/>
    </reaction>
</comment>
<comment type="pathway">
    <text evidence="2">Carbohydrate degradation; pentose phosphate pathway; D-glyceraldehyde 3-phosphate and beta-D-fructose 6-phosphate from D-ribose 5-phosphate and D-xylulose 5-phosphate (non-oxidative stage): step 2/3.</text>
</comment>
<comment type="subunit">
    <text evidence="1">Homodimer.</text>
</comment>
<comment type="subcellular location">
    <subcellularLocation>
        <location evidence="2">Cytoplasm</location>
    </subcellularLocation>
</comment>
<comment type="similarity">
    <text evidence="2">Belongs to the transaldolase family. Type 1 subfamily.</text>
</comment>
<keyword id="KW-0963">Cytoplasm</keyword>
<keyword id="KW-0570">Pentose shunt</keyword>
<keyword id="KW-1185">Reference proteome</keyword>
<keyword id="KW-0704">Schiff base</keyword>
<keyword id="KW-0808">Transferase</keyword>
<feature type="chain" id="PRO_1000126246" description="Transaldolase">
    <location>
        <begin position="1"/>
        <end position="315"/>
    </location>
</feature>
<feature type="active site" description="Schiff-base intermediate with substrate" evidence="2">
    <location>
        <position position="125"/>
    </location>
</feature>
<evidence type="ECO:0000250" key="1"/>
<evidence type="ECO:0000255" key="2">
    <source>
        <dbReference type="HAMAP-Rule" id="MF_00492"/>
    </source>
</evidence>
<gene>
    <name evidence="2" type="primary">tal</name>
    <name type="ordered locus">Lcho_3386</name>
</gene>
<dbReference type="EC" id="2.2.1.2" evidence="2"/>
<dbReference type="EMBL" id="CP001013">
    <property type="protein sequence ID" value="ACB35644.1"/>
    <property type="molecule type" value="Genomic_DNA"/>
</dbReference>
<dbReference type="RefSeq" id="WP_012348391.1">
    <property type="nucleotide sequence ID" value="NC_010524.1"/>
</dbReference>
<dbReference type="SMR" id="B1Y2Y8"/>
<dbReference type="STRING" id="395495.Lcho_3386"/>
<dbReference type="KEGG" id="lch:Lcho_3386"/>
<dbReference type="eggNOG" id="COG0176">
    <property type="taxonomic scope" value="Bacteria"/>
</dbReference>
<dbReference type="HOGENOM" id="CLU_047470_0_1_4"/>
<dbReference type="OrthoDB" id="9809101at2"/>
<dbReference type="UniPathway" id="UPA00115">
    <property type="reaction ID" value="UER00414"/>
</dbReference>
<dbReference type="Proteomes" id="UP000001693">
    <property type="component" value="Chromosome"/>
</dbReference>
<dbReference type="GO" id="GO:0005737">
    <property type="term" value="C:cytoplasm"/>
    <property type="evidence" value="ECO:0007669"/>
    <property type="project" value="UniProtKB-SubCell"/>
</dbReference>
<dbReference type="GO" id="GO:0004801">
    <property type="term" value="F:transaldolase activity"/>
    <property type="evidence" value="ECO:0000250"/>
    <property type="project" value="UniProtKB"/>
</dbReference>
<dbReference type="GO" id="GO:0005975">
    <property type="term" value="P:carbohydrate metabolic process"/>
    <property type="evidence" value="ECO:0007669"/>
    <property type="project" value="InterPro"/>
</dbReference>
<dbReference type="GO" id="GO:0006098">
    <property type="term" value="P:pentose-phosphate shunt"/>
    <property type="evidence" value="ECO:0007669"/>
    <property type="project" value="UniProtKB-UniRule"/>
</dbReference>
<dbReference type="CDD" id="cd00957">
    <property type="entry name" value="Transaldolase_TalAB"/>
    <property type="match status" value="1"/>
</dbReference>
<dbReference type="FunFam" id="3.20.20.70:FF:000002">
    <property type="entry name" value="Transaldolase"/>
    <property type="match status" value="1"/>
</dbReference>
<dbReference type="Gene3D" id="3.20.20.70">
    <property type="entry name" value="Aldolase class I"/>
    <property type="match status" value="1"/>
</dbReference>
<dbReference type="HAMAP" id="MF_00492">
    <property type="entry name" value="Transaldolase_1"/>
    <property type="match status" value="1"/>
</dbReference>
<dbReference type="InterPro" id="IPR013785">
    <property type="entry name" value="Aldolase_TIM"/>
</dbReference>
<dbReference type="InterPro" id="IPR001585">
    <property type="entry name" value="TAL/FSA"/>
</dbReference>
<dbReference type="InterPro" id="IPR004730">
    <property type="entry name" value="Transaldolase_1"/>
</dbReference>
<dbReference type="InterPro" id="IPR018225">
    <property type="entry name" value="Transaldolase_AS"/>
</dbReference>
<dbReference type="NCBIfam" id="TIGR00874">
    <property type="entry name" value="talAB"/>
    <property type="match status" value="1"/>
</dbReference>
<dbReference type="PANTHER" id="PTHR10683">
    <property type="entry name" value="TRANSALDOLASE"/>
    <property type="match status" value="1"/>
</dbReference>
<dbReference type="PANTHER" id="PTHR10683:SF18">
    <property type="entry name" value="TRANSALDOLASE"/>
    <property type="match status" value="1"/>
</dbReference>
<dbReference type="Pfam" id="PF00923">
    <property type="entry name" value="TAL_FSA"/>
    <property type="match status" value="1"/>
</dbReference>
<dbReference type="SUPFAM" id="SSF51569">
    <property type="entry name" value="Aldolase"/>
    <property type="match status" value="1"/>
</dbReference>
<dbReference type="PROSITE" id="PS01054">
    <property type="entry name" value="TRANSALDOLASE_1"/>
    <property type="match status" value="1"/>
</dbReference>
<reference key="1">
    <citation type="submission" date="2008-03" db="EMBL/GenBank/DDBJ databases">
        <title>Complete sequence of Leptothrix cholodnii SP-6.</title>
        <authorList>
            <consortium name="US DOE Joint Genome Institute"/>
            <person name="Copeland A."/>
            <person name="Lucas S."/>
            <person name="Lapidus A."/>
            <person name="Glavina del Rio T."/>
            <person name="Dalin E."/>
            <person name="Tice H."/>
            <person name="Bruce D."/>
            <person name="Goodwin L."/>
            <person name="Pitluck S."/>
            <person name="Chertkov O."/>
            <person name="Brettin T."/>
            <person name="Detter J.C."/>
            <person name="Han C."/>
            <person name="Kuske C.R."/>
            <person name="Schmutz J."/>
            <person name="Larimer F."/>
            <person name="Land M."/>
            <person name="Hauser L."/>
            <person name="Kyrpides N."/>
            <person name="Lykidis A."/>
            <person name="Emerson D."/>
            <person name="Richardson P."/>
        </authorList>
    </citation>
    <scope>NUCLEOTIDE SEQUENCE [LARGE SCALE GENOMIC DNA]</scope>
    <source>
        <strain>ATCC 51168 / LMG 8142 / SP-6</strain>
    </source>
</reference>
<name>TAL_LEPCP</name>
<proteinExistence type="inferred from homology"/>